<organism>
    <name type="scientific">Vibrio parahaemolyticus serotype O3:K6 (strain RIMD 2210633)</name>
    <dbReference type="NCBI Taxonomy" id="223926"/>
    <lineage>
        <taxon>Bacteria</taxon>
        <taxon>Pseudomonadati</taxon>
        <taxon>Pseudomonadota</taxon>
        <taxon>Gammaproteobacteria</taxon>
        <taxon>Vibrionales</taxon>
        <taxon>Vibrionaceae</taxon>
        <taxon>Vibrio</taxon>
    </lineage>
</organism>
<proteinExistence type="inferred from homology"/>
<feature type="chain" id="PRO_0000214660" description="UPF0231 protein VP2494">
    <location>
        <begin position="1"/>
        <end position="122"/>
    </location>
</feature>
<sequence>MEFEFIRNTLMGEYYVKCSMGHEIVGRWLQEEIGKDPTMIAQVEALIDKAFSLPSQEHTLTGTEISLMIQGDEVLVQENALSHDYDVEMESEFDFYDAESTASCGIEDFVALIEQWKDFLNI</sequence>
<gene>
    <name type="ordered locus">VP2494</name>
</gene>
<evidence type="ECO:0000255" key="1">
    <source>
        <dbReference type="HAMAP-Rule" id="MF_01053"/>
    </source>
</evidence>
<name>Y2494_VIBPA</name>
<dbReference type="EMBL" id="BA000031">
    <property type="protein sequence ID" value="BAC60757.1"/>
    <property type="molecule type" value="Genomic_DNA"/>
</dbReference>
<dbReference type="RefSeq" id="NP_798873.1">
    <property type="nucleotide sequence ID" value="NC_004603.1"/>
</dbReference>
<dbReference type="RefSeq" id="WP_005490395.1">
    <property type="nucleotide sequence ID" value="NC_004603.1"/>
</dbReference>
<dbReference type="GeneID" id="1190009"/>
<dbReference type="KEGG" id="vpa:VP2494"/>
<dbReference type="PATRIC" id="fig|223926.6.peg.2395"/>
<dbReference type="eggNOG" id="COG3112">
    <property type="taxonomic scope" value="Bacteria"/>
</dbReference>
<dbReference type="HOGENOM" id="CLU_139226_1_0_6"/>
<dbReference type="Proteomes" id="UP000002493">
    <property type="component" value="Chromosome 1"/>
</dbReference>
<dbReference type="HAMAP" id="MF_01053">
    <property type="entry name" value="UPF0231"/>
    <property type="match status" value="1"/>
</dbReference>
<dbReference type="InterPro" id="IPR008249">
    <property type="entry name" value="UPF0231"/>
</dbReference>
<dbReference type="NCBIfam" id="NF003579">
    <property type="entry name" value="PRK05248.2-4"/>
    <property type="match status" value="1"/>
</dbReference>
<dbReference type="Pfam" id="PF06062">
    <property type="entry name" value="UPF0231"/>
    <property type="match status" value="1"/>
</dbReference>
<dbReference type="PIRSF" id="PIRSF006287">
    <property type="entry name" value="UCP006287"/>
    <property type="match status" value="1"/>
</dbReference>
<accession>Q87LW4</accession>
<comment type="similarity">
    <text evidence="1">Belongs to the UPF0231 family.</text>
</comment>
<protein>
    <recommendedName>
        <fullName evidence="1">UPF0231 protein VP2494</fullName>
    </recommendedName>
</protein>
<reference key="1">
    <citation type="journal article" date="2003" name="Lancet">
        <title>Genome sequence of Vibrio parahaemolyticus: a pathogenic mechanism distinct from that of V. cholerae.</title>
        <authorList>
            <person name="Makino K."/>
            <person name="Oshima K."/>
            <person name="Kurokawa K."/>
            <person name="Yokoyama K."/>
            <person name="Uda T."/>
            <person name="Tagomori K."/>
            <person name="Iijima Y."/>
            <person name="Najima M."/>
            <person name="Nakano M."/>
            <person name="Yamashita A."/>
            <person name="Kubota Y."/>
            <person name="Kimura S."/>
            <person name="Yasunaga T."/>
            <person name="Honda T."/>
            <person name="Shinagawa H."/>
            <person name="Hattori M."/>
            <person name="Iida T."/>
        </authorList>
    </citation>
    <scope>NUCLEOTIDE SEQUENCE [LARGE SCALE GENOMIC DNA]</scope>
    <source>
        <strain>RIMD 2210633</strain>
    </source>
</reference>